<protein>
    <recommendedName>
        <fullName evidence="1">1-deoxy-D-xylulose-5-phosphate synthase</fullName>
        <ecNumber evidence="1">2.2.1.7</ecNumber>
    </recommendedName>
    <alternativeName>
        <fullName evidence="1">1-deoxyxylulose-5-phosphate synthase</fullName>
        <shortName evidence="1">DXP synthase</shortName>
        <shortName evidence="1">DXPS</shortName>
    </alternativeName>
</protein>
<evidence type="ECO:0000255" key="1">
    <source>
        <dbReference type="HAMAP-Rule" id="MF_00315"/>
    </source>
</evidence>
<proteinExistence type="inferred from homology"/>
<dbReference type="EC" id="2.2.1.7" evidence="1"/>
<dbReference type="EMBL" id="AM260525">
    <property type="protein sequence ID" value="CAK01083.1"/>
    <property type="molecule type" value="Genomic_DNA"/>
</dbReference>
<dbReference type="RefSeq" id="WP_012231188.1">
    <property type="nucleotide sequence ID" value="NC_010161.1"/>
</dbReference>
<dbReference type="SMR" id="A9IQP2"/>
<dbReference type="KEGG" id="btr:BT_0649"/>
<dbReference type="eggNOG" id="COG1154">
    <property type="taxonomic scope" value="Bacteria"/>
</dbReference>
<dbReference type="HOGENOM" id="CLU_009227_1_4_5"/>
<dbReference type="UniPathway" id="UPA00064">
    <property type="reaction ID" value="UER00091"/>
</dbReference>
<dbReference type="Proteomes" id="UP000001592">
    <property type="component" value="Chromosome"/>
</dbReference>
<dbReference type="GO" id="GO:0008661">
    <property type="term" value="F:1-deoxy-D-xylulose-5-phosphate synthase activity"/>
    <property type="evidence" value="ECO:0007669"/>
    <property type="project" value="UniProtKB-UniRule"/>
</dbReference>
<dbReference type="GO" id="GO:0000287">
    <property type="term" value="F:magnesium ion binding"/>
    <property type="evidence" value="ECO:0007669"/>
    <property type="project" value="UniProtKB-UniRule"/>
</dbReference>
<dbReference type="GO" id="GO:0030976">
    <property type="term" value="F:thiamine pyrophosphate binding"/>
    <property type="evidence" value="ECO:0007669"/>
    <property type="project" value="UniProtKB-UniRule"/>
</dbReference>
<dbReference type="GO" id="GO:0052865">
    <property type="term" value="P:1-deoxy-D-xylulose 5-phosphate biosynthetic process"/>
    <property type="evidence" value="ECO:0007669"/>
    <property type="project" value="UniProtKB-UniPathway"/>
</dbReference>
<dbReference type="GO" id="GO:0019682">
    <property type="term" value="P:glyceraldehyde-3-phosphate metabolic process"/>
    <property type="evidence" value="ECO:0007669"/>
    <property type="project" value="UniProtKB-ARBA"/>
</dbReference>
<dbReference type="GO" id="GO:0016114">
    <property type="term" value="P:terpenoid biosynthetic process"/>
    <property type="evidence" value="ECO:0007669"/>
    <property type="project" value="UniProtKB-UniRule"/>
</dbReference>
<dbReference type="GO" id="GO:0009228">
    <property type="term" value="P:thiamine biosynthetic process"/>
    <property type="evidence" value="ECO:0007669"/>
    <property type="project" value="UniProtKB-UniRule"/>
</dbReference>
<dbReference type="CDD" id="cd02007">
    <property type="entry name" value="TPP_DXS"/>
    <property type="match status" value="1"/>
</dbReference>
<dbReference type="CDD" id="cd07033">
    <property type="entry name" value="TPP_PYR_DXS_TK_like"/>
    <property type="match status" value="1"/>
</dbReference>
<dbReference type="FunFam" id="3.40.50.920:FF:000002">
    <property type="entry name" value="1-deoxy-D-xylulose-5-phosphate synthase"/>
    <property type="match status" value="1"/>
</dbReference>
<dbReference type="FunFam" id="3.40.50.970:FF:000005">
    <property type="entry name" value="1-deoxy-D-xylulose-5-phosphate synthase"/>
    <property type="match status" value="1"/>
</dbReference>
<dbReference type="Gene3D" id="3.40.50.920">
    <property type="match status" value="1"/>
</dbReference>
<dbReference type="Gene3D" id="3.40.50.970">
    <property type="match status" value="2"/>
</dbReference>
<dbReference type="HAMAP" id="MF_00315">
    <property type="entry name" value="DXP_synth"/>
    <property type="match status" value="1"/>
</dbReference>
<dbReference type="InterPro" id="IPR005477">
    <property type="entry name" value="Dxylulose-5-P_synthase"/>
</dbReference>
<dbReference type="InterPro" id="IPR029061">
    <property type="entry name" value="THDP-binding"/>
</dbReference>
<dbReference type="InterPro" id="IPR009014">
    <property type="entry name" value="Transketo_C/PFOR_II"/>
</dbReference>
<dbReference type="InterPro" id="IPR005475">
    <property type="entry name" value="Transketolase-like_Pyr-bd"/>
</dbReference>
<dbReference type="InterPro" id="IPR033248">
    <property type="entry name" value="Transketolase_C"/>
</dbReference>
<dbReference type="InterPro" id="IPR049557">
    <property type="entry name" value="Transketolase_CS"/>
</dbReference>
<dbReference type="NCBIfam" id="TIGR00204">
    <property type="entry name" value="dxs"/>
    <property type="match status" value="1"/>
</dbReference>
<dbReference type="NCBIfam" id="NF003933">
    <property type="entry name" value="PRK05444.2-2"/>
    <property type="match status" value="1"/>
</dbReference>
<dbReference type="PANTHER" id="PTHR43322">
    <property type="entry name" value="1-D-DEOXYXYLULOSE 5-PHOSPHATE SYNTHASE-RELATED"/>
    <property type="match status" value="1"/>
</dbReference>
<dbReference type="PANTHER" id="PTHR43322:SF5">
    <property type="entry name" value="1-DEOXY-D-XYLULOSE-5-PHOSPHATE SYNTHASE, CHLOROPLASTIC"/>
    <property type="match status" value="1"/>
</dbReference>
<dbReference type="Pfam" id="PF13292">
    <property type="entry name" value="DXP_synthase_N"/>
    <property type="match status" value="1"/>
</dbReference>
<dbReference type="Pfam" id="PF02779">
    <property type="entry name" value="Transket_pyr"/>
    <property type="match status" value="1"/>
</dbReference>
<dbReference type="Pfam" id="PF02780">
    <property type="entry name" value="Transketolase_C"/>
    <property type="match status" value="1"/>
</dbReference>
<dbReference type="SMART" id="SM00861">
    <property type="entry name" value="Transket_pyr"/>
    <property type="match status" value="1"/>
</dbReference>
<dbReference type="SUPFAM" id="SSF52518">
    <property type="entry name" value="Thiamin diphosphate-binding fold (THDP-binding)"/>
    <property type="match status" value="2"/>
</dbReference>
<dbReference type="SUPFAM" id="SSF52922">
    <property type="entry name" value="TK C-terminal domain-like"/>
    <property type="match status" value="1"/>
</dbReference>
<dbReference type="PROSITE" id="PS00801">
    <property type="entry name" value="TRANSKETOLASE_1"/>
    <property type="match status" value="1"/>
</dbReference>
<accession>A9IQP2</accession>
<feature type="chain" id="PRO_1000079082" description="1-deoxy-D-xylulose-5-phosphate synthase">
    <location>
        <begin position="1"/>
        <end position="635"/>
    </location>
</feature>
<feature type="binding site" evidence="1">
    <location>
        <position position="78"/>
    </location>
    <ligand>
        <name>thiamine diphosphate</name>
        <dbReference type="ChEBI" id="CHEBI:58937"/>
    </ligand>
</feature>
<feature type="binding site" evidence="1">
    <location>
        <begin position="119"/>
        <end position="121"/>
    </location>
    <ligand>
        <name>thiamine diphosphate</name>
        <dbReference type="ChEBI" id="CHEBI:58937"/>
    </ligand>
</feature>
<feature type="binding site" evidence="1">
    <location>
        <position position="151"/>
    </location>
    <ligand>
        <name>Mg(2+)</name>
        <dbReference type="ChEBI" id="CHEBI:18420"/>
    </ligand>
</feature>
<feature type="binding site" evidence="1">
    <location>
        <begin position="152"/>
        <end position="153"/>
    </location>
    <ligand>
        <name>thiamine diphosphate</name>
        <dbReference type="ChEBI" id="CHEBI:58937"/>
    </ligand>
</feature>
<feature type="binding site" evidence="1">
    <location>
        <position position="180"/>
    </location>
    <ligand>
        <name>Mg(2+)</name>
        <dbReference type="ChEBI" id="CHEBI:18420"/>
    </ligand>
</feature>
<feature type="binding site" evidence="1">
    <location>
        <position position="180"/>
    </location>
    <ligand>
        <name>thiamine diphosphate</name>
        <dbReference type="ChEBI" id="CHEBI:58937"/>
    </ligand>
</feature>
<feature type="binding site" evidence="1">
    <location>
        <position position="289"/>
    </location>
    <ligand>
        <name>thiamine diphosphate</name>
        <dbReference type="ChEBI" id="CHEBI:58937"/>
    </ligand>
</feature>
<feature type="binding site" evidence="1">
    <location>
        <position position="371"/>
    </location>
    <ligand>
        <name>thiamine diphosphate</name>
        <dbReference type="ChEBI" id="CHEBI:58937"/>
    </ligand>
</feature>
<keyword id="KW-0414">Isoprene biosynthesis</keyword>
<keyword id="KW-0460">Magnesium</keyword>
<keyword id="KW-0479">Metal-binding</keyword>
<keyword id="KW-0784">Thiamine biosynthesis</keyword>
<keyword id="KW-0786">Thiamine pyrophosphate</keyword>
<keyword id="KW-0808">Transferase</keyword>
<reference key="1">
    <citation type="journal article" date="2007" name="Nat. Genet.">
        <title>Genomic analysis of Bartonella identifies type IV secretion systems as host adaptability factors.</title>
        <authorList>
            <person name="Saenz H.L."/>
            <person name="Engel P."/>
            <person name="Stoeckli M.C."/>
            <person name="Lanz C."/>
            <person name="Raddatz G."/>
            <person name="Vayssier-Taussat M."/>
            <person name="Birtles R."/>
            <person name="Schuster S.C."/>
            <person name="Dehio C."/>
        </authorList>
    </citation>
    <scope>NUCLEOTIDE SEQUENCE [LARGE SCALE GENOMIC DNA]</scope>
    <source>
        <strain>CIP 105476 / IBS 506</strain>
    </source>
</reference>
<organism>
    <name type="scientific">Bartonella tribocorum (strain CIP 105476 / IBS 506)</name>
    <dbReference type="NCBI Taxonomy" id="382640"/>
    <lineage>
        <taxon>Bacteria</taxon>
        <taxon>Pseudomonadati</taxon>
        <taxon>Pseudomonadota</taxon>
        <taxon>Alphaproteobacteria</taxon>
        <taxon>Hyphomicrobiales</taxon>
        <taxon>Bartonellaceae</taxon>
        <taxon>Bartonella</taxon>
    </lineage>
</organism>
<comment type="function">
    <text evidence="1">Catalyzes the acyloin condensation reaction between C atoms 2 and 3 of pyruvate and glyceraldehyde 3-phosphate to yield 1-deoxy-D-xylulose-5-phosphate (DXP).</text>
</comment>
<comment type="catalytic activity">
    <reaction evidence="1">
        <text>D-glyceraldehyde 3-phosphate + pyruvate + H(+) = 1-deoxy-D-xylulose 5-phosphate + CO2</text>
        <dbReference type="Rhea" id="RHEA:12605"/>
        <dbReference type="ChEBI" id="CHEBI:15361"/>
        <dbReference type="ChEBI" id="CHEBI:15378"/>
        <dbReference type="ChEBI" id="CHEBI:16526"/>
        <dbReference type="ChEBI" id="CHEBI:57792"/>
        <dbReference type="ChEBI" id="CHEBI:59776"/>
        <dbReference type="EC" id="2.2.1.7"/>
    </reaction>
</comment>
<comment type="cofactor">
    <cofactor evidence="1">
        <name>Mg(2+)</name>
        <dbReference type="ChEBI" id="CHEBI:18420"/>
    </cofactor>
    <text evidence="1">Binds 1 Mg(2+) ion per subunit.</text>
</comment>
<comment type="cofactor">
    <cofactor evidence="1">
        <name>thiamine diphosphate</name>
        <dbReference type="ChEBI" id="CHEBI:58937"/>
    </cofactor>
    <text evidence="1">Binds 1 thiamine pyrophosphate per subunit.</text>
</comment>
<comment type="pathway">
    <text evidence="1">Metabolic intermediate biosynthesis; 1-deoxy-D-xylulose 5-phosphate biosynthesis; 1-deoxy-D-xylulose 5-phosphate from D-glyceraldehyde 3-phosphate and pyruvate: step 1/1.</text>
</comment>
<comment type="subunit">
    <text evidence="1">Homodimer.</text>
</comment>
<comment type="similarity">
    <text evidence="1">Belongs to the transketolase family. DXPS subfamily.</text>
</comment>
<gene>
    <name evidence="1" type="primary">dxs</name>
    <name type="ordered locus">BT_0649</name>
</gene>
<sequence length="635" mass="69381">MSQVLTPLLDRVCFPQDLRALPESYLVQLANELRTETIDAVSVTGGHLGAGLGVVELTVALHYIFNTPEDRIIWDVGHQTYPHKILTGRREKIRTLRQEGGLSGFTKRVESVYDPFGAGHSSTSISAGLGMAVASALKEEKKRKVIAVIGDGAMSAGMAYEAMNNAGALNARLIVILNDNDMSIAPPTGSMSAHLARLVSRPSYRHLRERVKMLSEKLPKFFWDKARRSEEFARGLLVGGTLFDELGFYYVGPIDGHNLGHLLPVLKNVREYPHGPVLVHVVTHKGKGYPPAEASSDKYHGVNRFDVTTGKQVKASSNILPYTKVFSKALVEEACHDDKIVGITAAMPTGTGLDSFAEKFPEKMFDVGIAEQHAVTFAAGLACEGYKPFVAIYSTFLQRAYDQIIHDVSIQKLPVRFAIDRAGFVGADGATHAGSFDIVFLATLPEFVVMAPSDELELMHMVRTAAAYDQGPISFRYPRGEGIGIDLPQRGEILEIGKGRVLREGNRIALVCFGTRMSEVLRAADRLGAKGLSTTVADARFAKPLDKDLMRRLAREHEVLVTIEEGAIGGFGAHLLQFLAQEGLLEHGLKVRTLKFPDEYLNHGSPEKVLSTIGLDAMGIVNTVLTVVGREIRME</sequence>
<name>DXS_BART1</name>